<accession>A1VXH8</accession>
<organism>
    <name type="scientific">Campylobacter jejuni subsp. jejuni serotype O:23/36 (strain 81-176)</name>
    <dbReference type="NCBI Taxonomy" id="354242"/>
    <lineage>
        <taxon>Bacteria</taxon>
        <taxon>Pseudomonadati</taxon>
        <taxon>Campylobacterota</taxon>
        <taxon>Epsilonproteobacteria</taxon>
        <taxon>Campylobacterales</taxon>
        <taxon>Campylobacteraceae</taxon>
        <taxon>Campylobacter</taxon>
    </lineage>
</organism>
<reference key="1">
    <citation type="submission" date="2006-12" db="EMBL/GenBank/DDBJ databases">
        <authorList>
            <person name="Fouts D.E."/>
            <person name="Nelson K.E."/>
            <person name="Sebastian Y."/>
        </authorList>
    </citation>
    <scope>NUCLEOTIDE SEQUENCE [LARGE SCALE GENOMIC DNA]</scope>
    <source>
        <strain>81-176</strain>
    </source>
</reference>
<keyword id="KW-0687">Ribonucleoprotein</keyword>
<keyword id="KW-0689">Ribosomal protein</keyword>
<evidence type="ECO:0000255" key="1">
    <source>
        <dbReference type="HAMAP-Rule" id="MF_00539"/>
    </source>
</evidence>
<evidence type="ECO:0000305" key="2"/>
<feature type="chain" id="PRO_1000017444" description="Large ribosomal subunit protein bL27">
    <location>
        <begin position="1"/>
        <end position="84"/>
    </location>
</feature>
<proteinExistence type="inferred from homology"/>
<sequence>MAHKKGQGSTQNNRDSIGRRLGVKKFGGEFVRAGNIIIRQRGTATHAGNNVGMGKDHTIFALIDGFVKFERKDKDRKKVSVYPA</sequence>
<gene>
    <name evidence="1" type="primary">rpmA</name>
    <name type="ordered locus">CJJ81176_0130</name>
</gene>
<protein>
    <recommendedName>
        <fullName evidence="1">Large ribosomal subunit protein bL27</fullName>
    </recommendedName>
    <alternativeName>
        <fullName evidence="2">50S ribosomal protein L27</fullName>
    </alternativeName>
</protein>
<comment type="similarity">
    <text evidence="1">Belongs to the bacterial ribosomal protein bL27 family.</text>
</comment>
<name>RL27_CAMJJ</name>
<dbReference type="EMBL" id="CP000538">
    <property type="protein sequence ID" value="EAQ71977.1"/>
    <property type="molecule type" value="Genomic_DNA"/>
</dbReference>
<dbReference type="RefSeq" id="WP_002800974.1">
    <property type="nucleotide sequence ID" value="NC_008787.1"/>
</dbReference>
<dbReference type="SMR" id="A1VXH8"/>
<dbReference type="GeneID" id="98394801"/>
<dbReference type="KEGG" id="cjj:CJJ81176_0130"/>
<dbReference type="eggNOG" id="COG0211">
    <property type="taxonomic scope" value="Bacteria"/>
</dbReference>
<dbReference type="HOGENOM" id="CLU_095424_4_0_7"/>
<dbReference type="Proteomes" id="UP000000646">
    <property type="component" value="Chromosome"/>
</dbReference>
<dbReference type="GO" id="GO:0022625">
    <property type="term" value="C:cytosolic large ribosomal subunit"/>
    <property type="evidence" value="ECO:0007669"/>
    <property type="project" value="TreeGrafter"/>
</dbReference>
<dbReference type="GO" id="GO:0003735">
    <property type="term" value="F:structural constituent of ribosome"/>
    <property type="evidence" value="ECO:0007669"/>
    <property type="project" value="InterPro"/>
</dbReference>
<dbReference type="GO" id="GO:0006412">
    <property type="term" value="P:translation"/>
    <property type="evidence" value="ECO:0007669"/>
    <property type="project" value="UniProtKB-UniRule"/>
</dbReference>
<dbReference type="FunFam" id="2.40.50.100:FF:000004">
    <property type="entry name" value="50S ribosomal protein L27"/>
    <property type="match status" value="1"/>
</dbReference>
<dbReference type="Gene3D" id="2.40.50.100">
    <property type="match status" value="1"/>
</dbReference>
<dbReference type="HAMAP" id="MF_00539">
    <property type="entry name" value="Ribosomal_bL27"/>
    <property type="match status" value="1"/>
</dbReference>
<dbReference type="InterPro" id="IPR001684">
    <property type="entry name" value="Ribosomal_bL27"/>
</dbReference>
<dbReference type="InterPro" id="IPR018261">
    <property type="entry name" value="Ribosomal_bL27_CS"/>
</dbReference>
<dbReference type="NCBIfam" id="TIGR00062">
    <property type="entry name" value="L27"/>
    <property type="match status" value="1"/>
</dbReference>
<dbReference type="PANTHER" id="PTHR15893:SF0">
    <property type="entry name" value="LARGE RIBOSOMAL SUBUNIT PROTEIN BL27M"/>
    <property type="match status" value="1"/>
</dbReference>
<dbReference type="PANTHER" id="PTHR15893">
    <property type="entry name" value="RIBOSOMAL PROTEIN L27"/>
    <property type="match status" value="1"/>
</dbReference>
<dbReference type="Pfam" id="PF01016">
    <property type="entry name" value="Ribosomal_L27"/>
    <property type="match status" value="1"/>
</dbReference>
<dbReference type="PRINTS" id="PR00063">
    <property type="entry name" value="RIBOSOMALL27"/>
</dbReference>
<dbReference type="SUPFAM" id="SSF110324">
    <property type="entry name" value="Ribosomal L27 protein-like"/>
    <property type="match status" value="1"/>
</dbReference>
<dbReference type="PROSITE" id="PS00831">
    <property type="entry name" value="RIBOSOMAL_L27"/>
    <property type="match status" value="1"/>
</dbReference>